<protein>
    <recommendedName>
        <fullName evidence="1">Met repressor</fullName>
    </recommendedName>
    <alternativeName>
        <fullName evidence="1">Met regulon regulatory protein MetJ</fullName>
    </alternativeName>
</protein>
<organism>
    <name type="scientific">Salmonella paratyphi B (strain ATCC BAA-1250 / SPB7)</name>
    <dbReference type="NCBI Taxonomy" id="1016998"/>
    <lineage>
        <taxon>Bacteria</taxon>
        <taxon>Pseudomonadati</taxon>
        <taxon>Pseudomonadota</taxon>
        <taxon>Gammaproteobacteria</taxon>
        <taxon>Enterobacterales</taxon>
        <taxon>Enterobacteriaceae</taxon>
        <taxon>Salmonella</taxon>
    </lineage>
</organism>
<reference key="1">
    <citation type="submission" date="2007-11" db="EMBL/GenBank/DDBJ databases">
        <authorList>
            <consortium name="The Salmonella enterica serovar Paratyphi B Genome Sequencing Project"/>
            <person name="McClelland M."/>
            <person name="Sanderson E.K."/>
            <person name="Porwollik S."/>
            <person name="Spieth J."/>
            <person name="Clifton W.S."/>
            <person name="Fulton R."/>
            <person name="Cordes M."/>
            <person name="Wollam A."/>
            <person name="Shah N."/>
            <person name="Pepin K."/>
            <person name="Bhonagiri V."/>
            <person name="Nash W."/>
            <person name="Johnson M."/>
            <person name="Thiruvilangam P."/>
            <person name="Wilson R."/>
        </authorList>
    </citation>
    <scope>NUCLEOTIDE SEQUENCE [LARGE SCALE GENOMIC DNA]</scope>
    <source>
        <strain>ATCC BAA-1250 / SPB7</strain>
    </source>
</reference>
<sequence length="105" mass="12142">MAEWSGEYISPYAEHGKKSEQVKKITVSIPLKVLKILTDERTRRQVNNLRHATNSELLCEAFLHAFTGQPLPDDADLRKERSDEIPEAAKEIMREMGIDPETWEY</sequence>
<proteinExistence type="inferred from homology"/>
<accession>A9MZJ3</accession>
<feature type="chain" id="PRO_1000083475" description="Met repressor">
    <location>
        <begin position="1"/>
        <end position="105"/>
    </location>
</feature>
<comment type="function">
    <text evidence="1">This regulatory protein, when combined with SAM (S-adenosylmethionine) represses the expression of the methionine regulon and of enzymes involved in SAM synthesis.</text>
</comment>
<comment type="subunit">
    <text evidence="1">Homodimer.</text>
</comment>
<comment type="subcellular location">
    <subcellularLocation>
        <location evidence="1">Cytoplasm</location>
    </subcellularLocation>
</comment>
<comment type="domain">
    <text>Does not bind DNA by a helix-turn-helix motif.</text>
</comment>
<comment type="similarity">
    <text evidence="1">Belongs to the MetJ family.</text>
</comment>
<evidence type="ECO:0000255" key="1">
    <source>
        <dbReference type="HAMAP-Rule" id="MF_00744"/>
    </source>
</evidence>
<name>METJ_SALPB</name>
<keyword id="KW-0028">Amino-acid biosynthesis</keyword>
<keyword id="KW-0963">Cytoplasm</keyword>
<keyword id="KW-0238">DNA-binding</keyword>
<keyword id="KW-0486">Methionine biosynthesis</keyword>
<keyword id="KW-0678">Repressor</keyword>
<keyword id="KW-0804">Transcription</keyword>
<keyword id="KW-0805">Transcription regulation</keyword>
<dbReference type="EMBL" id="CP000886">
    <property type="protein sequence ID" value="ABX70371.1"/>
    <property type="molecule type" value="Genomic_DNA"/>
</dbReference>
<dbReference type="RefSeq" id="WP_000852811.1">
    <property type="nucleotide sequence ID" value="NC_010102.1"/>
</dbReference>
<dbReference type="SMR" id="A9MZJ3"/>
<dbReference type="GeneID" id="66758351"/>
<dbReference type="KEGG" id="spq:SPAB_05080"/>
<dbReference type="PATRIC" id="fig|1016998.12.peg.4768"/>
<dbReference type="HOGENOM" id="CLU_142318_0_0_6"/>
<dbReference type="BioCyc" id="SENT1016998:SPAB_RS20665-MONOMER"/>
<dbReference type="Proteomes" id="UP000008556">
    <property type="component" value="Chromosome"/>
</dbReference>
<dbReference type="GO" id="GO:0005737">
    <property type="term" value="C:cytoplasm"/>
    <property type="evidence" value="ECO:0007669"/>
    <property type="project" value="UniProtKB-SubCell"/>
</dbReference>
<dbReference type="GO" id="GO:0003677">
    <property type="term" value="F:DNA binding"/>
    <property type="evidence" value="ECO:0007669"/>
    <property type="project" value="UniProtKB-KW"/>
</dbReference>
<dbReference type="GO" id="GO:0003700">
    <property type="term" value="F:DNA-binding transcription factor activity"/>
    <property type="evidence" value="ECO:0007669"/>
    <property type="project" value="InterPro"/>
</dbReference>
<dbReference type="GO" id="GO:0009086">
    <property type="term" value="P:methionine biosynthetic process"/>
    <property type="evidence" value="ECO:0007669"/>
    <property type="project" value="UniProtKB-UniRule"/>
</dbReference>
<dbReference type="GO" id="GO:0045892">
    <property type="term" value="P:negative regulation of DNA-templated transcription"/>
    <property type="evidence" value="ECO:0007669"/>
    <property type="project" value="UniProtKB-UniRule"/>
</dbReference>
<dbReference type="CDD" id="cd00490">
    <property type="entry name" value="Met_repressor_MetJ"/>
    <property type="match status" value="1"/>
</dbReference>
<dbReference type="FunFam" id="1.10.140.10:FF:000001">
    <property type="entry name" value="Met repressor"/>
    <property type="match status" value="1"/>
</dbReference>
<dbReference type="Gene3D" id="1.10.140.10">
    <property type="entry name" value="MET Apo-Repressor, subunit A"/>
    <property type="match status" value="1"/>
</dbReference>
<dbReference type="HAMAP" id="MF_00744">
    <property type="entry name" value="MetJ"/>
    <property type="match status" value="1"/>
</dbReference>
<dbReference type="InterPro" id="IPR002084">
    <property type="entry name" value="Met_repressor_MetJ"/>
</dbReference>
<dbReference type="InterPro" id="IPR023453">
    <property type="entry name" value="Met_repressor_MetJ_dom_sf"/>
</dbReference>
<dbReference type="InterPro" id="IPR010985">
    <property type="entry name" value="Ribbon_hlx_hlx"/>
</dbReference>
<dbReference type="NCBIfam" id="NF003622">
    <property type="entry name" value="PRK05264.1"/>
    <property type="match status" value="1"/>
</dbReference>
<dbReference type="Pfam" id="PF01340">
    <property type="entry name" value="MetJ"/>
    <property type="match status" value="1"/>
</dbReference>
<dbReference type="SUPFAM" id="SSF47598">
    <property type="entry name" value="Ribbon-helix-helix"/>
    <property type="match status" value="1"/>
</dbReference>
<gene>
    <name evidence="1" type="primary">metJ</name>
    <name type="ordered locus">SPAB_05080</name>
</gene>